<accession>Q2TGY3</accession>
<sequence>MKPPILTIIMSTVISGTIMVLISSHWLTVWIGFEMNMLAIVPILMKKFNPRAMEASTKYFLTQATASMLLMLGIIINLLLTGQWTVLNMPNPIASNTMTVALAMKLGLSPFHFWVPEVTQGVPLSSGMILLTWQKIAPLSILYQISPSTNPNLLMTMAALSVLVGGWGGLNQTQLRKILAYSSIAHMGWMIAVTTYNPTLMMLNLAIYIMMTLGTFMLFMLNSSTTTLSLSHVWNKLPLTTSLILMIMLSLGGLPPLSGFIPKWMIIHELTKNNMIIMATFMAITALLNLYFYMRLTYATALTMFPSTNIMKMKWQFENTKNTTLLPPLIVISTMLLPLTPMMLSLF</sequence>
<evidence type="ECO:0000250" key="1">
    <source>
        <dbReference type="UniProtKB" id="P03891"/>
    </source>
</evidence>
<evidence type="ECO:0000250" key="2">
    <source>
        <dbReference type="UniProtKB" id="P03892"/>
    </source>
</evidence>
<evidence type="ECO:0000255" key="3"/>
<evidence type="ECO:0000305" key="4"/>
<feature type="chain" id="PRO_0000226704" description="NADH-ubiquinone oxidoreductase chain 2">
    <location>
        <begin position="1"/>
        <end position="347"/>
    </location>
</feature>
<feature type="transmembrane region" description="Helical" evidence="3">
    <location>
        <begin position="5"/>
        <end position="22"/>
    </location>
</feature>
<feature type="transmembrane region" description="Helical" evidence="3">
    <location>
        <begin position="26"/>
        <end position="45"/>
    </location>
</feature>
<feature type="transmembrane region" description="Helical" evidence="3">
    <location>
        <begin position="60"/>
        <end position="80"/>
    </location>
</feature>
<feature type="transmembrane region" description="Helical" evidence="3">
    <location>
        <begin position="150"/>
        <end position="170"/>
    </location>
</feature>
<feature type="transmembrane region" description="Helical" evidence="3">
    <location>
        <begin position="178"/>
        <end position="198"/>
    </location>
</feature>
<feature type="transmembrane region" description="Helical" evidence="3">
    <location>
        <begin position="200"/>
        <end position="220"/>
    </location>
</feature>
<feature type="transmembrane region" description="Helical" evidence="3">
    <location>
        <begin position="242"/>
        <end position="262"/>
    </location>
</feature>
<feature type="transmembrane region" description="Helical" evidence="3">
    <location>
        <begin position="274"/>
        <end position="294"/>
    </location>
</feature>
<feature type="transmembrane region" description="Helical" evidence="3">
    <location>
        <begin position="324"/>
        <end position="344"/>
    </location>
</feature>
<gene>
    <name evidence="1" type="primary">MT-ND2</name>
    <name type="synonym">MTND2</name>
    <name type="synonym">NADH2</name>
    <name type="synonym">ND2</name>
</gene>
<proteinExistence type="inferred from homology"/>
<organism>
    <name type="scientific">Martes flavigula</name>
    <name type="common">Yellow-throated marten</name>
    <dbReference type="NCBI Taxonomy" id="74864"/>
    <lineage>
        <taxon>Eukaryota</taxon>
        <taxon>Metazoa</taxon>
        <taxon>Chordata</taxon>
        <taxon>Craniata</taxon>
        <taxon>Vertebrata</taxon>
        <taxon>Euteleostomi</taxon>
        <taxon>Mammalia</taxon>
        <taxon>Eutheria</taxon>
        <taxon>Laurasiatheria</taxon>
        <taxon>Carnivora</taxon>
        <taxon>Caniformia</taxon>
        <taxon>Musteloidea</taxon>
        <taxon>Mustelidae</taxon>
        <taxon>Guloninae</taxon>
        <taxon>Martes</taxon>
    </lineage>
</organism>
<keyword id="KW-0249">Electron transport</keyword>
<keyword id="KW-0472">Membrane</keyword>
<keyword id="KW-0496">Mitochondrion</keyword>
<keyword id="KW-0999">Mitochondrion inner membrane</keyword>
<keyword id="KW-0520">NAD</keyword>
<keyword id="KW-0679">Respiratory chain</keyword>
<keyword id="KW-1278">Translocase</keyword>
<keyword id="KW-0812">Transmembrane</keyword>
<keyword id="KW-1133">Transmembrane helix</keyword>
<keyword id="KW-0813">Transport</keyword>
<keyword id="KW-0830">Ubiquinone</keyword>
<comment type="function">
    <text evidence="1">Core subunit of the mitochondrial membrane respiratory chain NADH dehydrogenase (Complex I) which catalyzes electron transfer from NADH through the respiratory chain, using ubiquinone as an electron acceptor. Essential for the catalytic activity and assembly of complex I.</text>
</comment>
<comment type="catalytic activity">
    <reaction evidence="1">
        <text>a ubiquinone + NADH + 5 H(+)(in) = a ubiquinol + NAD(+) + 4 H(+)(out)</text>
        <dbReference type="Rhea" id="RHEA:29091"/>
        <dbReference type="Rhea" id="RHEA-COMP:9565"/>
        <dbReference type="Rhea" id="RHEA-COMP:9566"/>
        <dbReference type="ChEBI" id="CHEBI:15378"/>
        <dbReference type="ChEBI" id="CHEBI:16389"/>
        <dbReference type="ChEBI" id="CHEBI:17976"/>
        <dbReference type="ChEBI" id="CHEBI:57540"/>
        <dbReference type="ChEBI" id="CHEBI:57945"/>
        <dbReference type="EC" id="7.1.1.2"/>
    </reaction>
</comment>
<comment type="subunit">
    <text evidence="1 2">Core subunit of respiratory chain NADH dehydrogenase (Complex I) which is composed of 45 different subunits. Interacts with TMEM242 (By similarity).</text>
</comment>
<comment type="subcellular location">
    <subcellularLocation>
        <location evidence="2">Mitochondrion inner membrane</location>
        <topology evidence="3">Multi-pass membrane protein</topology>
    </subcellularLocation>
</comment>
<comment type="similarity">
    <text evidence="4">Belongs to the complex I subunit 2 family.</text>
</comment>
<reference key="1">
    <citation type="journal article" date="2006" name="Genetica">
        <title>Phylogeny of the caniform carnivora: evidence from multiple genes.</title>
        <authorList>
            <person name="Yu L."/>
            <person name="Zhang Y.P."/>
        </authorList>
    </citation>
    <scope>NUCLEOTIDE SEQUENCE [GENOMIC DNA]</scope>
</reference>
<name>NU2M_MARFA</name>
<protein>
    <recommendedName>
        <fullName evidence="1">NADH-ubiquinone oxidoreductase chain 2</fullName>
        <ecNumber evidence="1">7.1.1.2</ecNumber>
    </recommendedName>
    <alternativeName>
        <fullName>NADH dehydrogenase subunit 2</fullName>
    </alternativeName>
</protein>
<geneLocation type="mitochondrion"/>
<dbReference type="EC" id="7.1.1.2" evidence="1"/>
<dbReference type="EMBL" id="AY882061">
    <property type="protein sequence ID" value="AAX76796.1"/>
    <property type="molecule type" value="Genomic_DNA"/>
</dbReference>
<dbReference type="SMR" id="Q2TGY3"/>
<dbReference type="GO" id="GO:0005743">
    <property type="term" value="C:mitochondrial inner membrane"/>
    <property type="evidence" value="ECO:0000250"/>
    <property type="project" value="UniProtKB"/>
</dbReference>
<dbReference type="GO" id="GO:0008137">
    <property type="term" value="F:NADH dehydrogenase (ubiquinone) activity"/>
    <property type="evidence" value="ECO:0000250"/>
    <property type="project" value="UniProtKB"/>
</dbReference>
<dbReference type="GO" id="GO:0006120">
    <property type="term" value="P:mitochondrial electron transport, NADH to ubiquinone"/>
    <property type="evidence" value="ECO:0000250"/>
    <property type="project" value="UniProtKB"/>
</dbReference>
<dbReference type="GO" id="GO:0032981">
    <property type="term" value="P:mitochondrial respiratory chain complex I assembly"/>
    <property type="evidence" value="ECO:0000250"/>
    <property type="project" value="UniProtKB"/>
</dbReference>
<dbReference type="InterPro" id="IPR050175">
    <property type="entry name" value="Complex_I_Subunit_2"/>
</dbReference>
<dbReference type="InterPro" id="IPR010933">
    <property type="entry name" value="NADH_DH_su2_C"/>
</dbReference>
<dbReference type="InterPro" id="IPR003917">
    <property type="entry name" value="NADH_UbQ_OxRdtase_chain2"/>
</dbReference>
<dbReference type="InterPro" id="IPR001750">
    <property type="entry name" value="ND/Mrp_TM"/>
</dbReference>
<dbReference type="PANTHER" id="PTHR46552">
    <property type="entry name" value="NADH-UBIQUINONE OXIDOREDUCTASE CHAIN 2"/>
    <property type="match status" value="1"/>
</dbReference>
<dbReference type="PANTHER" id="PTHR46552:SF1">
    <property type="entry name" value="NADH-UBIQUINONE OXIDOREDUCTASE CHAIN 2"/>
    <property type="match status" value="1"/>
</dbReference>
<dbReference type="Pfam" id="PF06444">
    <property type="entry name" value="NADH_dehy_S2_C"/>
    <property type="match status" value="1"/>
</dbReference>
<dbReference type="Pfam" id="PF00361">
    <property type="entry name" value="Proton_antipo_M"/>
    <property type="match status" value="1"/>
</dbReference>
<dbReference type="PRINTS" id="PR01436">
    <property type="entry name" value="NADHDHGNASE2"/>
</dbReference>